<reference key="1">
    <citation type="journal article" date="2006" name="BMC Evol. Biol.">
        <title>Complete plastid genome sequences of Drimys, Liriodendron, and Piper: implications for the phylogenetic relationships of magnoliids.</title>
        <authorList>
            <person name="Cai Z."/>
            <person name="Penaflor C."/>
            <person name="Kuehl J.V."/>
            <person name="Leebens-Mack J."/>
            <person name="Carlson J.E."/>
            <person name="dePamphilis C.W."/>
            <person name="Boore J.L."/>
            <person name="Jansen R.K."/>
        </authorList>
    </citation>
    <scope>NUCLEOTIDE SEQUENCE [LARGE SCALE GENOMIC DNA]</scope>
</reference>
<name>NU2C1_DRIGR</name>
<gene>
    <name evidence="1" type="primary">ndhB1</name>
</gene>
<proteinExistence type="inferred from homology"/>
<dbReference type="EC" id="7.1.1.-" evidence="1"/>
<dbReference type="EMBL" id="DQ887676">
    <property type="protein sequence ID" value="ABH88342.1"/>
    <property type="molecule type" value="Genomic_DNA"/>
</dbReference>
<dbReference type="SMR" id="P0CC58"/>
<dbReference type="GO" id="GO:0009535">
    <property type="term" value="C:chloroplast thylakoid membrane"/>
    <property type="evidence" value="ECO:0007669"/>
    <property type="project" value="UniProtKB-SubCell"/>
</dbReference>
<dbReference type="GO" id="GO:0008137">
    <property type="term" value="F:NADH dehydrogenase (ubiquinone) activity"/>
    <property type="evidence" value="ECO:0007669"/>
    <property type="project" value="InterPro"/>
</dbReference>
<dbReference type="GO" id="GO:0048038">
    <property type="term" value="F:quinone binding"/>
    <property type="evidence" value="ECO:0007669"/>
    <property type="project" value="UniProtKB-KW"/>
</dbReference>
<dbReference type="GO" id="GO:0042773">
    <property type="term" value="P:ATP synthesis coupled electron transport"/>
    <property type="evidence" value="ECO:0007669"/>
    <property type="project" value="InterPro"/>
</dbReference>
<dbReference type="GO" id="GO:0019684">
    <property type="term" value="P:photosynthesis, light reaction"/>
    <property type="evidence" value="ECO:0007669"/>
    <property type="project" value="UniProtKB-UniRule"/>
</dbReference>
<dbReference type="HAMAP" id="MF_00445">
    <property type="entry name" value="NDH1_NuoN_1"/>
    <property type="match status" value="1"/>
</dbReference>
<dbReference type="InterPro" id="IPR010096">
    <property type="entry name" value="NADH-Q_OxRdtase_suN/2"/>
</dbReference>
<dbReference type="InterPro" id="IPR001750">
    <property type="entry name" value="ND/Mrp_TM"/>
</dbReference>
<dbReference type="InterPro" id="IPR045693">
    <property type="entry name" value="Ndh2_N"/>
</dbReference>
<dbReference type="NCBIfam" id="TIGR01770">
    <property type="entry name" value="NDH_I_N"/>
    <property type="match status" value="1"/>
</dbReference>
<dbReference type="NCBIfam" id="NF002701">
    <property type="entry name" value="PRK02504.1"/>
    <property type="match status" value="1"/>
</dbReference>
<dbReference type="PANTHER" id="PTHR22773">
    <property type="entry name" value="NADH DEHYDROGENASE"/>
    <property type="match status" value="1"/>
</dbReference>
<dbReference type="Pfam" id="PF19530">
    <property type="entry name" value="Ndh2_N"/>
    <property type="match status" value="1"/>
</dbReference>
<dbReference type="Pfam" id="PF00361">
    <property type="entry name" value="Proton_antipo_M"/>
    <property type="match status" value="1"/>
</dbReference>
<dbReference type="PRINTS" id="PR01434">
    <property type="entry name" value="NADHDHGNASE5"/>
</dbReference>
<comment type="function">
    <text evidence="1">NDH shuttles electrons from NAD(P)H:plastoquinone, via FMN and iron-sulfur (Fe-S) centers, to quinones in the photosynthetic chain and possibly in a chloroplast respiratory chain. The immediate electron acceptor for the enzyme in this species is believed to be plastoquinone. Couples the redox reaction to proton translocation, and thus conserves the redox energy in a proton gradient.</text>
</comment>
<comment type="catalytic activity">
    <reaction evidence="1">
        <text>a plastoquinone + NADH + (n+1) H(+)(in) = a plastoquinol + NAD(+) + n H(+)(out)</text>
        <dbReference type="Rhea" id="RHEA:42608"/>
        <dbReference type="Rhea" id="RHEA-COMP:9561"/>
        <dbReference type="Rhea" id="RHEA-COMP:9562"/>
        <dbReference type="ChEBI" id="CHEBI:15378"/>
        <dbReference type="ChEBI" id="CHEBI:17757"/>
        <dbReference type="ChEBI" id="CHEBI:57540"/>
        <dbReference type="ChEBI" id="CHEBI:57945"/>
        <dbReference type="ChEBI" id="CHEBI:62192"/>
    </reaction>
</comment>
<comment type="catalytic activity">
    <reaction evidence="1">
        <text>a plastoquinone + NADPH + (n+1) H(+)(in) = a plastoquinol + NADP(+) + n H(+)(out)</text>
        <dbReference type="Rhea" id="RHEA:42612"/>
        <dbReference type="Rhea" id="RHEA-COMP:9561"/>
        <dbReference type="Rhea" id="RHEA-COMP:9562"/>
        <dbReference type="ChEBI" id="CHEBI:15378"/>
        <dbReference type="ChEBI" id="CHEBI:17757"/>
        <dbReference type="ChEBI" id="CHEBI:57783"/>
        <dbReference type="ChEBI" id="CHEBI:58349"/>
        <dbReference type="ChEBI" id="CHEBI:62192"/>
    </reaction>
</comment>
<comment type="subunit">
    <text evidence="1">NDH is composed of at least 16 different subunits, 5 of which are encoded in the nucleus.</text>
</comment>
<comment type="subcellular location">
    <subcellularLocation>
        <location evidence="1">Plastid</location>
        <location evidence="1">Chloroplast thylakoid membrane</location>
        <topology evidence="1">Multi-pass membrane protein</topology>
    </subcellularLocation>
</comment>
<comment type="similarity">
    <text evidence="1">Belongs to the complex I subunit 2 family.</text>
</comment>
<sequence length="510" mass="56746">MIWHVQNENFILDSTRIFMKAFHLLLFHGSFIFPECILIFGLILLLMIDSTSDQKDIPWLYFISSTSLVMSITALLFRWREEPMISFSGNFQTNNFNEIFQFLILLCSTLCIPLSVEYIECTEMAITEFLLFVLTATLGGMFLCGANDSITIFVAPECFSLCSYLLSGYTKRDVRSNEATTKYLLMGGASSSILVHGFSWLYGSSGGEIELQEIVNGLINTQMYNSPGISIALIFITVGIGFKLSPAPFHQWTPDVYEGSPTPVVAFLSVTSKVAASAPATRIFDIPFYFSSNEWHLLLEILAILSMILGNLIAITQTSMKRMLAYSSIGQIGYVIIGIIVGDSNDGYASMITYMLFYISMNLGTFARIVLFGLRTGTDNIRDYAGLYTKDPFLALSSALCLLSLGGLPPLAGFFGKLHLFWCGWQAGLYFLVSIGLLTSVVSIYYYLKIIKLLMTGRKQEITPHVRNYRRSPLRSNNSIELSMIVCVIASTIPGISMNPIIAIAQDTLF</sequence>
<organism>
    <name type="scientific">Drimys granadensis</name>
    <dbReference type="NCBI Taxonomy" id="224735"/>
    <lineage>
        <taxon>Eukaryota</taxon>
        <taxon>Viridiplantae</taxon>
        <taxon>Streptophyta</taxon>
        <taxon>Embryophyta</taxon>
        <taxon>Tracheophyta</taxon>
        <taxon>Spermatophyta</taxon>
        <taxon>Magnoliopsida</taxon>
        <taxon>Magnoliidae</taxon>
        <taxon>Canellales</taxon>
        <taxon>Winteraceae</taxon>
        <taxon>Drimys</taxon>
    </lineage>
</organism>
<feature type="chain" id="PRO_0000275595" description="NAD(P)H-quinone oxidoreductase subunit 2 A, chloroplastic">
    <location>
        <begin position="1"/>
        <end position="510"/>
    </location>
</feature>
<feature type="transmembrane region" description="Helical" evidence="1">
    <location>
        <begin position="24"/>
        <end position="44"/>
    </location>
</feature>
<feature type="transmembrane region" description="Helical" evidence="1">
    <location>
        <begin position="57"/>
        <end position="77"/>
    </location>
</feature>
<feature type="transmembrane region" description="Helical" evidence="1">
    <location>
        <begin position="99"/>
        <end position="119"/>
    </location>
</feature>
<feature type="transmembrane region" description="Helical" evidence="1">
    <location>
        <begin position="124"/>
        <end position="144"/>
    </location>
</feature>
<feature type="transmembrane region" description="Helical" evidence="1">
    <location>
        <begin position="150"/>
        <end position="170"/>
    </location>
</feature>
<feature type="transmembrane region" description="Helical" evidence="1">
    <location>
        <begin position="183"/>
        <end position="203"/>
    </location>
</feature>
<feature type="transmembrane region" description="Helical" evidence="1">
    <location>
        <begin position="229"/>
        <end position="249"/>
    </location>
</feature>
<feature type="transmembrane region" description="Helical" evidence="1">
    <location>
        <begin position="295"/>
        <end position="315"/>
    </location>
</feature>
<feature type="transmembrane region" description="Helical" evidence="1">
    <location>
        <begin position="323"/>
        <end position="343"/>
    </location>
</feature>
<feature type="transmembrane region" description="Helical" evidence="1">
    <location>
        <begin position="354"/>
        <end position="374"/>
    </location>
</feature>
<feature type="transmembrane region" description="Helical" evidence="1">
    <location>
        <begin position="395"/>
        <end position="415"/>
    </location>
</feature>
<feature type="transmembrane region" description="Helical" evidence="1">
    <location>
        <begin position="418"/>
        <end position="438"/>
    </location>
</feature>
<feature type="transmembrane region" description="Helical" evidence="1">
    <location>
        <begin position="484"/>
        <end position="504"/>
    </location>
</feature>
<geneLocation type="chloroplast"/>
<accession>P0CC58</accession>
<accession>Q06GT6</accession>
<keyword id="KW-0150">Chloroplast</keyword>
<keyword id="KW-0472">Membrane</keyword>
<keyword id="KW-0520">NAD</keyword>
<keyword id="KW-0521">NADP</keyword>
<keyword id="KW-0934">Plastid</keyword>
<keyword id="KW-0618">Plastoquinone</keyword>
<keyword id="KW-0874">Quinone</keyword>
<keyword id="KW-0793">Thylakoid</keyword>
<keyword id="KW-1278">Translocase</keyword>
<keyword id="KW-0812">Transmembrane</keyword>
<keyword id="KW-1133">Transmembrane helix</keyword>
<keyword id="KW-0813">Transport</keyword>
<evidence type="ECO:0000255" key="1">
    <source>
        <dbReference type="HAMAP-Rule" id="MF_00445"/>
    </source>
</evidence>
<protein>
    <recommendedName>
        <fullName evidence="1">NAD(P)H-quinone oxidoreductase subunit 2 A, chloroplastic</fullName>
        <ecNumber evidence="1">7.1.1.-</ecNumber>
    </recommendedName>
    <alternativeName>
        <fullName evidence="1">NAD(P)H dehydrogenase, subunit 2 A</fullName>
    </alternativeName>
    <alternativeName>
        <fullName evidence="1">NADH-plastoquinone oxidoreductase subunit 2 A</fullName>
    </alternativeName>
</protein>